<name>FADI_ECO55</name>
<evidence type="ECO:0000255" key="1">
    <source>
        <dbReference type="HAMAP-Rule" id="MF_01618"/>
    </source>
</evidence>
<protein>
    <recommendedName>
        <fullName evidence="1">3-ketoacyl-CoA thiolase</fullName>
        <ecNumber evidence="1">2.3.1.16</ecNumber>
    </recommendedName>
    <alternativeName>
        <fullName evidence="1">ACSs</fullName>
    </alternativeName>
    <alternativeName>
        <fullName evidence="1">Acetyl-CoA acyltransferase</fullName>
    </alternativeName>
    <alternativeName>
        <fullName evidence="1">Acyl-CoA ligase</fullName>
    </alternativeName>
    <alternativeName>
        <fullName evidence="1">Beta-ketothiolase</fullName>
    </alternativeName>
    <alternativeName>
        <fullName evidence="1">Fatty acid oxidation complex subunit beta</fullName>
    </alternativeName>
</protein>
<feature type="chain" id="PRO_1000185959" description="3-ketoacyl-CoA thiolase">
    <location>
        <begin position="1"/>
        <end position="436"/>
    </location>
</feature>
<feature type="active site" description="Acyl-thioester intermediate" evidence="1">
    <location>
        <position position="99"/>
    </location>
</feature>
<feature type="active site" description="Proton acceptor" evidence="1">
    <location>
        <position position="392"/>
    </location>
</feature>
<feature type="active site" description="Proton acceptor" evidence="1">
    <location>
        <position position="422"/>
    </location>
</feature>
<organism>
    <name type="scientific">Escherichia coli (strain 55989 / EAEC)</name>
    <dbReference type="NCBI Taxonomy" id="585055"/>
    <lineage>
        <taxon>Bacteria</taxon>
        <taxon>Pseudomonadati</taxon>
        <taxon>Pseudomonadota</taxon>
        <taxon>Gammaproteobacteria</taxon>
        <taxon>Enterobacterales</taxon>
        <taxon>Enterobacteriaceae</taxon>
        <taxon>Escherichia</taxon>
    </lineage>
</organism>
<gene>
    <name evidence="1" type="primary">fadI</name>
    <name type="ordered locus">EC55989_2586</name>
</gene>
<accession>B7LBJ6</accession>
<keyword id="KW-0012">Acyltransferase</keyword>
<keyword id="KW-0963">Cytoplasm</keyword>
<keyword id="KW-0276">Fatty acid metabolism</keyword>
<keyword id="KW-0442">Lipid degradation</keyword>
<keyword id="KW-0443">Lipid metabolism</keyword>
<keyword id="KW-1185">Reference proteome</keyword>
<keyword id="KW-0808">Transferase</keyword>
<dbReference type="EC" id="2.3.1.16" evidence="1"/>
<dbReference type="EMBL" id="CU928145">
    <property type="protein sequence ID" value="CAU98454.1"/>
    <property type="molecule type" value="Genomic_DNA"/>
</dbReference>
<dbReference type="RefSeq" id="WP_000531990.1">
    <property type="nucleotide sequence ID" value="NC_011748.1"/>
</dbReference>
<dbReference type="SMR" id="B7LBJ6"/>
<dbReference type="KEGG" id="eck:EC55989_2586"/>
<dbReference type="HOGENOM" id="CLU_031026_2_0_6"/>
<dbReference type="UniPathway" id="UPA00659"/>
<dbReference type="Proteomes" id="UP000000746">
    <property type="component" value="Chromosome"/>
</dbReference>
<dbReference type="GO" id="GO:0005829">
    <property type="term" value="C:cytosol"/>
    <property type="evidence" value="ECO:0007669"/>
    <property type="project" value="TreeGrafter"/>
</dbReference>
<dbReference type="GO" id="GO:0003988">
    <property type="term" value="F:acetyl-CoA C-acyltransferase activity"/>
    <property type="evidence" value="ECO:0007669"/>
    <property type="project" value="UniProtKB-UniRule"/>
</dbReference>
<dbReference type="GO" id="GO:0006635">
    <property type="term" value="P:fatty acid beta-oxidation"/>
    <property type="evidence" value="ECO:0007669"/>
    <property type="project" value="UniProtKB-UniRule"/>
</dbReference>
<dbReference type="CDD" id="cd00751">
    <property type="entry name" value="thiolase"/>
    <property type="match status" value="1"/>
</dbReference>
<dbReference type="FunFam" id="3.40.47.10:FF:000011">
    <property type="entry name" value="3-ketoacyl-CoA thiolase"/>
    <property type="match status" value="1"/>
</dbReference>
<dbReference type="Gene3D" id="3.40.47.10">
    <property type="match status" value="1"/>
</dbReference>
<dbReference type="HAMAP" id="MF_01618">
    <property type="entry name" value="FadI"/>
    <property type="match status" value="1"/>
</dbReference>
<dbReference type="InterPro" id="IPR012806">
    <property type="entry name" value="Ac-CoA_C-AcTrfase_FadI"/>
</dbReference>
<dbReference type="InterPro" id="IPR002155">
    <property type="entry name" value="Thiolase"/>
</dbReference>
<dbReference type="InterPro" id="IPR016039">
    <property type="entry name" value="Thiolase-like"/>
</dbReference>
<dbReference type="InterPro" id="IPR020615">
    <property type="entry name" value="Thiolase_acyl_enz_int_AS"/>
</dbReference>
<dbReference type="InterPro" id="IPR020610">
    <property type="entry name" value="Thiolase_AS"/>
</dbReference>
<dbReference type="InterPro" id="IPR020617">
    <property type="entry name" value="Thiolase_C"/>
</dbReference>
<dbReference type="InterPro" id="IPR020613">
    <property type="entry name" value="Thiolase_CS"/>
</dbReference>
<dbReference type="InterPro" id="IPR020616">
    <property type="entry name" value="Thiolase_N"/>
</dbReference>
<dbReference type="NCBIfam" id="TIGR01930">
    <property type="entry name" value="AcCoA-C-Actrans"/>
    <property type="match status" value="1"/>
</dbReference>
<dbReference type="NCBIfam" id="TIGR02446">
    <property type="entry name" value="FadI"/>
    <property type="match status" value="1"/>
</dbReference>
<dbReference type="NCBIfam" id="NF006516">
    <property type="entry name" value="PRK08963.1"/>
    <property type="match status" value="1"/>
</dbReference>
<dbReference type="PANTHER" id="PTHR18919:SF107">
    <property type="entry name" value="ACETYL-COA ACETYLTRANSFERASE, CYTOSOLIC"/>
    <property type="match status" value="1"/>
</dbReference>
<dbReference type="PANTHER" id="PTHR18919">
    <property type="entry name" value="ACETYL-COA C-ACYLTRANSFERASE"/>
    <property type="match status" value="1"/>
</dbReference>
<dbReference type="Pfam" id="PF02803">
    <property type="entry name" value="Thiolase_C"/>
    <property type="match status" value="1"/>
</dbReference>
<dbReference type="Pfam" id="PF00108">
    <property type="entry name" value="Thiolase_N"/>
    <property type="match status" value="1"/>
</dbReference>
<dbReference type="PIRSF" id="PIRSF000429">
    <property type="entry name" value="Ac-CoA_Ac_transf"/>
    <property type="match status" value="1"/>
</dbReference>
<dbReference type="SUPFAM" id="SSF53901">
    <property type="entry name" value="Thiolase-like"/>
    <property type="match status" value="2"/>
</dbReference>
<dbReference type="PROSITE" id="PS00098">
    <property type="entry name" value="THIOLASE_1"/>
    <property type="match status" value="1"/>
</dbReference>
<dbReference type="PROSITE" id="PS00737">
    <property type="entry name" value="THIOLASE_2"/>
    <property type="match status" value="1"/>
</dbReference>
<dbReference type="PROSITE" id="PS00099">
    <property type="entry name" value="THIOLASE_3"/>
    <property type="match status" value="1"/>
</dbReference>
<sequence>MGQVLPLVTRQGDRIAIVSGLRTPFARQGTAFHGIPAVDLGKMVVGELLARSEIPAEVIEQLVFGQVVQMPEAPNIAREIVLGTGMNVHTDAYSVSRACATSFQAVANVAESLMAGTIRAGIAGGADSSSVLPIGVSKKLARVLVDVNKARTMSQRLKLFSRLRLRDLMPVPPAVAEYSTGLRMGDTAEQMAKTYGITREQQDALAHRSHQRAAQAWSDGKLKEEVMTAFIPPYKQPLVEDNNIRGNSSLADYAKLRPAFDRKHGTVTAANSTPLTDGAAAVILMTESRAKELGLVPLGYLRSYAFTAIDVWQDMLLGPAWSTPLALERAGLTMSDLTLIDMHEAFAAQTLANIQLLGSERFAREVLGRAHATGEVDDSKFNVLGGSIAYGHPFAATGARMITQTLHELHRRGGGFGLVTACAAGGLGAAMVLEAE</sequence>
<proteinExistence type="inferred from homology"/>
<comment type="function">
    <text evidence="1">Catalyzes the final step of fatty acid oxidation in which acetyl-CoA is released and the CoA ester of a fatty acid two carbons shorter is formed.</text>
</comment>
<comment type="catalytic activity">
    <reaction evidence="1">
        <text>an acyl-CoA + acetyl-CoA = a 3-oxoacyl-CoA + CoA</text>
        <dbReference type="Rhea" id="RHEA:21564"/>
        <dbReference type="ChEBI" id="CHEBI:57287"/>
        <dbReference type="ChEBI" id="CHEBI:57288"/>
        <dbReference type="ChEBI" id="CHEBI:58342"/>
        <dbReference type="ChEBI" id="CHEBI:90726"/>
        <dbReference type="EC" id="2.3.1.16"/>
    </reaction>
</comment>
<comment type="pathway">
    <text evidence="1">Lipid metabolism; fatty acid beta-oxidation.</text>
</comment>
<comment type="subunit">
    <text evidence="1">Heterotetramer of two alpha chains (FadJ) and two beta chains (FadI).</text>
</comment>
<comment type="subcellular location">
    <subcellularLocation>
        <location evidence="1">Cytoplasm</location>
    </subcellularLocation>
</comment>
<comment type="similarity">
    <text evidence="1">Belongs to the thiolase-like superfamily. Thiolase family.</text>
</comment>
<reference key="1">
    <citation type="journal article" date="2009" name="PLoS Genet.">
        <title>Organised genome dynamics in the Escherichia coli species results in highly diverse adaptive paths.</title>
        <authorList>
            <person name="Touchon M."/>
            <person name="Hoede C."/>
            <person name="Tenaillon O."/>
            <person name="Barbe V."/>
            <person name="Baeriswyl S."/>
            <person name="Bidet P."/>
            <person name="Bingen E."/>
            <person name="Bonacorsi S."/>
            <person name="Bouchier C."/>
            <person name="Bouvet O."/>
            <person name="Calteau A."/>
            <person name="Chiapello H."/>
            <person name="Clermont O."/>
            <person name="Cruveiller S."/>
            <person name="Danchin A."/>
            <person name="Diard M."/>
            <person name="Dossat C."/>
            <person name="Karoui M.E."/>
            <person name="Frapy E."/>
            <person name="Garry L."/>
            <person name="Ghigo J.M."/>
            <person name="Gilles A.M."/>
            <person name="Johnson J."/>
            <person name="Le Bouguenec C."/>
            <person name="Lescat M."/>
            <person name="Mangenot S."/>
            <person name="Martinez-Jehanne V."/>
            <person name="Matic I."/>
            <person name="Nassif X."/>
            <person name="Oztas S."/>
            <person name="Petit M.A."/>
            <person name="Pichon C."/>
            <person name="Rouy Z."/>
            <person name="Ruf C.S."/>
            <person name="Schneider D."/>
            <person name="Tourret J."/>
            <person name="Vacherie B."/>
            <person name="Vallenet D."/>
            <person name="Medigue C."/>
            <person name="Rocha E.P.C."/>
            <person name="Denamur E."/>
        </authorList>
    </citation>
    <scope>NUCLEOTIDE SEQUENCE [LARGE SCALE GENOMIC DNA]</scope>
    <source>
        <strain>55989 / EAEC</strain>
    </source>
</reference>